<feature type="chain" id="PRO_0000379244" description="ATP-dependent helicase/nuclease subunit A">
    <location>
        <begin position="1"/>
        <end position="1241"/>
    </location>
</feature>
<feature type="domain" description="UvrD-like helicase ATP-binding" evidence="1">
    <location>
        <begin position="12"/>
        <end position="485"/>
    </location>
</feature>
<feature type="domain" description="UvrD-like helicase C-terminal" evidence="1">
    <location>
        <begin position="505"/>
        <end position="805"/>
    </location>
</feature>
<feature type="binding site" evidence="1">
    <location>
        <begin position="33"/>
        <end position="40"/>
    </location>
    <ligand>
        <name>ATP</name>
        <dbReference type="ChEBI" id="CHEBI:30616"/>
    </ligand>
</feature>
<sequence>MIENWPKKPEGSQWTDDQWKAVVANGRDILVAAAAGSGKTAVLVERIIKKIINEENPVDVDRLLVVTFTNAAAQEMKNRIGEALEKVLIDEPGSQHIRKQLSLLNKASISTIHSFCLQVIRGYYYMLDVDPRFRIANQTENELLKEEVLDDILEEEYGIEDNTIFFELVDRYTSDRSDDDLQRMILALHTESRAHPNPEKWLDKLVEAYDVEGKTIEDLVYASYLLEDVKFQLETAEQHIRKATELAMLPDGPAPRVETLQADLALLGTLSSAARESWTSVYEAMQNVSWQTLKRIKKSDYNEDIVKQVDSLRNKAKDEVKKLQEELFSRRPESFLRDFQDMHPVLEKLVQLVKVFTERFQAMKRDKGMVDFTDLEHFCLQILSEQSEDGEMKPSAVALQYRNKFAEVLVDEYQDTNFVQESIIKFVTKDSESEGNLFMVGDVKQSIYRFRLAEPGLFLGKYKRFTQEGLGGGMKIDLAKNFRSRHEVLAGTNFIFKQIMGEEVGEIDYDADAELKLGATYPEGEDVAAELLCIQQTEEEVIDGEEGAEVEKAQLEARLMAQRIKAMVDSGYEVYDRKTDSMRPVQYRDFVILLRSMPWAPQIMEELKLQGIPVYADLATGYFEATEVNIMMNVFRVIDNPMQDIPLAAVLRSPIVGLNDEELATLRAHGKKGSFYEVMSSFLKGAPLEEEKELHDKLEWFYNLLQGWREFARQQSLSDLIWKVYGETGYYDFVGGLPAGKQRQANLRVLYDRARQYEATSFRGLFRFLRFIERILERGDDMGTARALGEQEDVVRIMTIHKSKGLEFPVVFVAGLGRRFNTQDLMKRFLLHKDFGFGSQFIDPRKRIKYTTLSQLAIKRKMKMELIAEEMRVLYVALTRAKEKLILIGTVKDANKEMEKWLDAREYSEWLLPDHIRAGASCYLDWIAPSLYRHRDSEMLLELGQGSIPDEIYGYDTSWKVEVVDGNTLLAPEPVQEEKQELLEALREKKAVPLQSERKDEVYDRLMWKYGYEEATSHRAKQSVTEIKRNYQSEEGSDNAFIKKLRAPIQTRPRFMEKKGLTYAERGTAVHAVMQHVDLKKPITVEVLQEQIAGMVNKELLTFEQAEEIAVEKVISFFDSDLGKRVLAAKSVEREVPFTMMLAAEEAYQDWQGKSGESILVQGVIDCMIEEEDGITLIDFKTDTIEGKFPGGFEQAKPILEERYKVQLSLYAKALEKSLQHPVKEKCLYFFDGNHVIKVEE</sequence>
<reference key="1">
    <citation type="journal article" date="2006" name="J. Bacteriol.">
        <title>Pathogenomic sequence analysis of Bacillus cereus and Bacillus thuringiensis isolates closely related to Bacillus anthracis.</title>
        <authorList>
            <person name="Han C.S."/>
            <person name="Xie G."/>
            <person name="Challacombe J.F."/>
            <person name="Altherr M.R."/>
            <person name="Bhotika S.S."/>
            <person name="Bruce D."/>
            <person name="Campbell C.S."/>
            <person name="Campbell M.L."/>
            <person name="Chen J."/>
            <person name="Chertkov O."/>
            <person name="Cleland C."/>
            <person name="Dimitrijevic M."/>
            <person name="Doggett N.A."/>
            <person name="Fawcett J.J."/>
            <person name="Glavina T."/>
            <person name="Goodwin L.A."/>
            <person name="Hill K.K."/>
            <person name="Hitchcock P."/>
            <person name="Jackson P.J."/>
            <person name="Keim P."/>
            <person name="Kewalramani A.R."/>
            <person name="Longmire J."/>
            <person name="Lucas S."/>
            <person name="Malfatti S."/>
            <person name="McMurry K."/>
            <person name="Meincke L.J."/>
            <person name="Misra M."/>
            <person name="Moseman B.L."/>
            <person name="Mundt M."/>
            <person name="Munk A.C."/>
            <person name="Okinaka R.T."/>
            <person name="Parson-Quintana B."/>
            <person name="Reilly L.P."/>
            <person name="Richardson P."/>
            <person name="Robinson D.L."/>
            <person name="Rubin E."/>
            <person name="Saunders E."/>
            <person name="Tapia R."/>
            <person name="Tesmer J.G."/>
            <person name="Thayer N."/>
            <person name="Thompson L.S."/>
            <person name="Tice H."/>
            <person name="Ticknor L.O."/>
            <person name="Wills P.L."/>
            <person name="Brettin T.S."/>
            <person name="Gilna P."/>
        </authorList>
    </citation>
    <scope>NUCLEOTIDE SEQUENCE [LARGE SCALE GENOMIC DNA]</scope>
    <source>
        <strain>97-27</strain>
    </source>
</reference>
<dbReference type="EC" id="3.1.-.-" evidence="1"/>
<dbReference type="EC" id="5.6.2.4" evidence="1"/>
<dbReference type="EMBL" id="AE017355">
    <property type="protein sequence ID" value="AAT62216.1"/>
    <property type="molecule type" value="Genomic_DNA"/>
</dbReference>
<dbReference type="RefSeq" id="WP_000572274.1">
    <property type="nucleotide sequence ID" value="NC_005957.1"/>
</dbReference>
<dbReference type="RefSeq" id="YP_035378.1">
    <property type="nucleotide sequence ID" value="NC_005957.1"/>
</dbReference>
<dbReference type="SMR" id="Q6HM43"/>
<dbReference type="KEGG" id="btk:BT9727_1041"/>
<dbReference type="PATRIC" id="fig|281309.8.peg.1095"/>
<dbReference type="HOGENOM" id="CLU_001114_3_1_9"/>
<dbReference type="Proteomes" id="UP000001301">
    <property type="component" value="Chromosome"/>
</dbReference>
<dbReference type="GO" id="GO:0005829">
    <property type="term" value="C:cytosol"/>
    <property type="evidence" value="ECO:0007669"/>
    <property type="project" value="TreeGrafter"/>
</dbReference>
<dbReference type="GO" id="GO:0033202">
    <property type="term" value="C:DNA helicase complex"/>
    <property type="evidence" value="ECO:0007669"/>
    <property type="project" value="TreeGrafter"/>
</dbReference>
<dbReference type="GO" id="GO:0043138">
    <property type="term" value="F:3'-5' DNA helicase activity"/>
    <property type="evidence" value="ECO:0007669"/>
    <property type="project" value="UniProtKB-UniRule"/>
</dbReference>
<dbReference type="GO" id="GO:0008408">
    <property type="term" value="F:3'-5' exonuclease activity"/>
    <property type="evidence" value="ECO:0007669"/>
    <property type="project" value="UniProtKB-UniRule"/>
</dbReference>
<dbReference type="GO" id="GO:0005524">
    <property type="term" value="F:ATP binding"/>
    <property type="evidence" value="ECO:0007669"/>
    <property type="project" value="UniProtKB-UniRule"/>
</dbReference>
<dbReference type="GO" id="GO:0016887">
    <property type="term" value="F:ATP hydrolysis activity"/>
    <property type="evidence" value="ECO:0007669"/>
    <property type="project" value="RHEA"/>
</dbReference>
<dbReference type="GO" id="GO:0003690">
    <property type="term" value="F:double-stranded DNA binding"/>
    <property type="evidence" value="ECO:0007669"/>
    <property type="project" value="UniProtKB-UniRule"/>
</dbReference>
<dbReference type="GO" id="GO:0000724">
    <property type="term" value="P:double-strand break repair via homologous recombination"/>
    <property type="evidence" value="ECO:0007669"/>
    <property type="project" value="UniProtKB-UniRule"/>
</dbReference>
<dbReference type="CDD" id="cd18807">
    <property type="entry name" value="SF1_C_UvrD"/>
    <property type="match status" value="1"/>
</dbReference>
<dbReference type="FunFam" id="3.40.50.300:FF:001164">
    <property type="entry name" value="ATP-dependent helicase/nuclease subunit A"/>
    <property type="match status" value="1"/>
</dbReference>
<dbReference type="FunFam" id="3.40.50.300:FF:001187">
    <property type="entry name" value="ATP-dependent helicase/nuclease subunit A"/>
    <property type="match status" value="1"/>
</dbReference>
<dbReference type="FunFam" id="3.40.50.300:FF:001196">
    <property type="entry name" value="ATP-dependent helicase/nuclease subunit A"/>
    <property type="match status" value="1"/>
</dbReference>
<dbReference type="FunFam" id="3.40.50.300:FF:001236">
    <property type="entry name" value="ATP-dependent helicase/nuclease subunit A"/>
    <property type="match status" value="1"/>
</dbReference>
<dbReference type="FunFam" id="3.90.320.10:FF:000008">
    <property type="entry name" value="ATP-dependent helicase/nuclease subunit A"/>
    <property type="match status" value="1"/>
</dbReference>
<dbReference type="Gene3D" id="3.90.320.10">
    <property type="match status" value="1"/>
</dbReference>
<dbReference type="Gene3D" id="6.10.250.2380">
    <property type="match status" value="1"/>
</dbReference>
<dbReference type="Gene3D" id="3.40.50.300">
    <property type="entry name" value="P-loop containing nucleotide triphosphate hydrolases"/>
    <property type="match status" value="4"/>
</dbReference>
<dbReference type="HAMAP" id="MF_01451">
    <property type="entry name" value="AddA"/>
    <property type="match status" value="1"/>
</dbReference>
<dbReference type="InterPro" id="IPR014152">
    <property type="entry name" value="AddA"/>
</dbReference>
<dbReference type="InterPro" id="IPR014017">
    <property type="entry name" value="DNA_helicase_UvrD-like_C"/>
</dbReference>
<dbReference type="InterPro" id="IPR000212">
    <property type="entry name" value="DNA_helicase_UvrD/REP"/>
</dbReference>
<dbReference type="InterPro" id="IPR027417">
    <property type="entry name" value="P-loop_NTPase"/>
</dbReference>
<dbReference type="InterPro" id="IPR011604">
    <property type="entry name" value="PDDEXK-like_dom_sf"/>
</dbReference>
<dbReference type="InterPro" id="IPR038726">
    <property type="entry name" value="PDDEXK_AddAB-type"/>
</dbReference>
<dbReference type="InterPro" id="IPR011335">
    <property type="entry name" value="Restrct_endonuc-II-like"/>
</dbReference>
<dbReference type="InterPro" id="IPR014016">
    <property type="entry name" value="UvrD-like_ATP-bd"/>
</dbReference>
<dbReference type="NCBIfam" id="TIGR02785">
    <property type="entry name" value="addA_Gpos"/>
    <property type="match status" value="1"/>
</dbReference>
<dbReference type="PANTHER" id="PTHR11070:SF48">
    <property type="entry name" value="ATP-DEPENDENT HELICASE_NUCLEASE SUBUNIT A"/>
    <property type="match status" value="1"/>
</dbReference>
<dbReference type="PANTHER" id="PTHR11070">
    <property type="entry name" value="UVRD / RECB / PCRA DNA HELICASE FAMILY MEMBER"/>
    <property type="match status" value="1"/>
</dbReference>
<dbReference type="Pfam" id="PF12705">
    <property type="entry name" value="PDDEXK_1"/>
    <property type="match status" value="1"/>
</dbReference>
<dbReference type="Pfam" id="PF00580">
    <property type="entry name" value="UvrD-helicase"/>
    <property type="match status" value="1"/>
</dbReference>
<dbReference type="Pfam" id="PF13361">
    <property type="entry name" value="UvrD_C"/>
    <property type="match status" value="1"/>
</dbReference>
<dbReference type="SUPFAM" id="SSF52540">
    <property type="entry name" value="P-loop containing nucleoside triphosphate hydrolases"/>
    <property type="match status" value="1"/>
</dbReference>
<dbReference type="SUPFAM" id="SSF52980">
    <property type="entry name" value="Restriction endonuclease-like"/>
    <property type="match status" value="1"/>
</dbReference>
<dbReference type="PROSITE" id="PS51198">
    <property type="entry name" value="UVRD_HELICASE_ATP_BIND"/>
    <property type="match status" value="1"/>
</dbReference>
<dbReference type="PROSITE" id="PS51217">
    <property type="entry name" value="UVRD_HELICASE_CTER"/>
    <property type="match status" value="1"/>
</dbReference>
<protein>
    <recommendedName>
        <fullName evidence="1">ATP-dependent helicase/nuclease subunit A</fullName>
        <ecNumber evidence="1">3.1.-.-</ecNumber>
        <ecNumber evidence="1">5.6.2.4</ecNumber>
    </recommendedName>
    <alternativeName>
        <fullName evidence="1">ATP-dependent helicase/nuclease AddA</fullName>
    </alternativeName>
    <alternativeName>
        <fullName evidence="1">DNA 3'-5' helicase AddA</fullName>
    </alternativeName>
</protein>
<organism>
    <name type="scientific">Bacillus thuringiensis subsp. konkukian (strain 97-27)</name>
    <dbReference type="NCBI Taxonomy" id="281309"/>
    <lineage>
        <taxon>Bacteria</taxon>
        <taxon>Bacillati</taxon>
        <taxon>Bacillota</taxon>
        <taxon>Bacilli</taxon>
        <taxon>Bacillales</taxon>
        <taxon>Bacillaceae</taxon>
        <taxon>Bacillus</taxon>
        <taxon>Bacillus cereus group</taxon>
    </lineage>
</organism>
<proteinExistence type="inferred from homology"/>
<keyword id="KW-0067">ATP-binding</keyword>
<keyword id="KW-0227">DNA damage</keyword>
<keyword id="KW-0234">DNA repair</keyword>
<keyword id="KW-0238">DNA-binding</keyword>
<keyword id="KW-0269">Exonuclease</keyword>
<keyword id="KW-0347">Helicase</keyword>
<keyword id="KW-0378">Hydrolase</keyword>
<keyword id="KW-0413">Isomerase</keyword>
<keyword id="KW-0540">Nuclease</keyword>
<keyword id="KW-0547">Nucleotide-binding</keyword>
<accession>Q6HM43</accession>
<evidence type="ECO:0000255" key="1">
    <source>
        <dbReference type="HAMAP-Rule" id="MF_01451"/>
    </source>
</evidence>
<name>ADDA_BACHK</name>
<gene>
    <name evidence="1" type="primary">addA</name>
    <name type="ordered locus">BT9727_1041</name>
</gene>
<comment type="function">
    <text evidence="1">The heterodimer acts as both an ATP-dependent DNA helicase and an ATP-dependent, dual-direction single-stranded exonuclease. Recognizes the chi site generating a DNA molecule suitable for the initiation of homologous recombination. The AddA nuclease domain is required for chi fragment generation; this subunit has the helicase and 3' -&gt; 5' nuclease activities.</text>
</comment>
<comment type="catalytic activity">
    <reaction evidence="1">
        <text>Couples ATP hydrolysis with the unwinding of duplex DNA by translocating in the 3'-5' direction.</text>
        <dbReference type="EC" id="5.6.2.4"/>
    </reaction>
</comment>
<comment type="catalytic activity">
    <reaction evidence="1">
        <text>ATP + H2O = ADP + phosphate + H(+)</text>
        <dbReference type="Rhea" id="RHEA:13065"/>
        <dbReference type="ChEBI" id="CHEBI:15377"/>
        <dbReference type="ChEBI" id="CHEBI:15378"/>
        <dbReference type="ChEBI" id="CHEBI:30616"/>
        <dbReference type="ChEBI" id="CHEBI:43474"/>
        <dbReference type="ChEBI" id="CHEBI:456216"/>
        <dbReference type="EC" id="5.6.2.4"/>
    </reaction>
</comment>
<comment type="cofactor">
    <cofactor evidence="1">
        <name>Mg(2+)</name>
        <dbReference type="ChEBI" id="CHEBI:18420"/>
    </cofactor>
</comment>
<comment type="subunit">
    <text evidence="1">Heterodimer of AddA and AddB/RexB.</text>
</comment>
<comment type="similarity">
    <text evidence="1">Belongs to the helicase family. AddA subfamily.</text>
</comment>